<dbReference type="EMBL" id="CP000627">
    <property type="protein sequence ID" value="ABQ21394.1"/>
    <property type="molecule type" value="Genomic_DNA"/>
</dbReference>
<dbReference type="EMBL" id="CP001235">
    <property type="protein sequence ID" value="ACP08545.1"/>
    <property type="molecule type" value="Genomic_DNA"/>
</dbReference>
<dbReference type="RefSeq" id="WP_001214481.1">
    <property type="nucleotide sequence ID" value="NZ_JAACZH010000029.1"/>
</dbReference>
<dbReference type="SMR" id="A5F9F1"/>
<dbReference type="KEGG" id="vco:VC0395_A0034"/>
<dbReference type="KEGG" id="vcr:VC395_0526"/>
<dbReference type="PATRIC" id="fig|345073.21.peg.514"/>
<dbReference type="eggNOG" id="COG0583">
    <property type="taxonomic scope" value="Bacteria"/>
</dbReference>
<dbReference type="HOGENOM" id="CLU_063829_0_0_6"/>
<dbReference type="OrthoDB" id="3252676at2"/>
<dbReference type="Proteomes" id="UP000000249">
    <property type="component" value="Chromosome 2"/>
</dbReference>
<dbReference type="GO" id="GO:0003677">
    <property type="term" value="F:DNA binding"/>
    <property type="evidence" value="ECO:0007669"/>
    <property type="project" value="UniProtKB-UniRule"/>
</dbReference>
<dbReference type="GO" id="GO:0003700">
    <property type="term" value="F:DNA-binding transcription factor activity"/>
    <property type="evidence" value="ECO:0007669"/>
    <property type="project" value="UniProtKB-UniRule"/>
</dbReference>
<dbReference type="FunFam" id="1.10.10.10:FF:000061">
    <property type="entry name" value="HTH-type transcriptional regulator ArgP"/>
    <property type="match status" value="1"/>
</dbReference>
<dbReference type="Gene3D" id="3.40.190.290">
    <property type="match status" value="1"/>
</dbReference>
<dbReference type="Gene3D" id="1.10.10.10">
    <property type="entry name" value="Winged helix-like DNA-binding domain superfamily/Winged helix DNA-binding domain"/>
    <property type="match status" value="1"/>
</dbReference>
<dbReference type="HAMAP" id="MF_00513">
    <property type="entry name" value="HTH_type_ArgP"/>
    <property type="match status" value="1"/>
</dbReference>
<dbReference type="InterPro" id="IPR017685">
    <property type="entry name" value="ArgP"/>
</dbReference>
<dbReference type="InterPro" id="IPR023490">
    <property type="entry name" value="ArgP_gammaproteobact"/>
</dbReference>
<dbReference type="InterPro" id="IPR050176">
    <property type="entry name" value="LTTR"/>
</dbReference>
<dbReference type="InterPro" id="IPR005119">
    <property type="entry name" value="LysR_subst-bd"/>
</dbReference>
<dbReference type="InterPro" id="IPR000847">
    <property type="entry name" value="Tscrpt_reg_HTH_LysR"/>
</dbReference>
<dbReference type="InterPro" id="IPR036388">
    <property type="entry name" value="WH-like_DNA-bd_sf"/>
</dbReference>
<dbReference type="InterPro" id="IPR036390">
    <property type="entry name" value="WH_DNA-bd_sf"/>
</dbReference>
<dbReference type="NCBIfam" id="TIGR03298">
    <property type="entry name" value="argP"/>
    <property type="match status" value="1"/>
</dbReference>
<dbReference type="NCBIfam" id="NF002964">
    <property type="entry name" value="PRK03635.1"/>
    <property type="match status" value="1"/>
</dbReference>
<dbReference type="NCBIfam" id="NF009888">
    <property type="entry name" value="PRK13348.1"/>
    <property type="match status" value="1"/>
</dbReference>
<dbReference type="PANTHER" id="PTHR30579:SF2">
    <property type="entry name" value="HTH-TYPE TRANSCRIPTIONAL REGULATOR ARGP"/>
    <property type="match status" value="1"/>
</dbReference>
<dbReference type="PANTHER" id="PTHR30579">
    <property type="entry name" value="TRANSCRIPTIONAL REGULATOR"/>
    <property type="match status" value="1"/>
</dbReference>
<dbReference type="Pfam" id="PF00126">
    <property type="entry name" value="HTH_1"/>
    <property type="match status" value="1"/>
</dbReference>
<dbReference type="Pfam" id="PF03466">
    <property type="entry name" value="LysR_substrate"/>
    <property type="match status" value="1"/>
</dbReference>
<dbReference type="PRINTS" id="PR00039">
    <property type="entry name" value="HTHLYSR"/>
</dbReference>
<dbReference type="SUPFAM" id="SSF53850">
    <property type="entry name" value="Periplasmic binding protein-like II"/>
    <property type="match status" value="1"/>
</dbReference>
<dbReference type="SUPFAM" id="SSF46785">
    <property type="entry name" value="Winged helix' DNA-binding domain"/>
    <property type="match status" value="1"/>
</dbReference>
<dbReference type="PROSITE" id="PS50931">
    <property type="entry name" value="HTH_LYSR"/>
    <property type="match status" value="1"/>
</dbReference>
<protein>
    <recommendedName>
        <fullName evidence="1">HTH-type transcriptional regulator ArgP</fullName>
    </recommendedName>
</protein>
<name>ARGP_VIBC3</name>
<accession>A5F9F1</accession>
<accession>C3LX35</accession>
<proteinExistence type="inferred from homology"/>
<reference key="1">
    <citation type="submission" date="2007-03" db="EMBL/GenBank/DDBJ databases">
        <authorList>
            <person name="Heidelberg J."/>
        </authorList>
    </citation>
    <scope>NUCLEOTIDE SEQUENCE [LARGE SCALE GENOMIC DNA]</scope>
    <source>
        <strain>ATCC 39541 / Classical Ogawa 395 / O395</strain>
    </source>
</reference>
<reference key="2">
    <citation type="journal article" date="2008" name="PLoS ONE">
        <title>A recalibrated molecular clock and independent origins for the cholera pandemic clones.</title>
        <authorList>
            <person name="Feng L."/>
            <person name="Reeves P.R."/>
            <person name="Lan R."/>
            <person name="Ren Y."/>
            <person name="Gao C."/>
            <person name="Zhou Z."/>
            <person name="Ren Y."/>
            <person name="Cheng J."/>
            <person name="Wang W."/>
            <person name="Wang J."/>
            <person name="Qian W."/>
            <person name="Li D."/>
            <person name="Wang L."/>
        </authorList>
    </citation>
    <scope>NUCLEOTIDE SEQUENCE [LARGE SCALE GENOMIC DNA]</scope>
    <source>
        <strain>ATCC 39541 / Classical Ogawa 395 / O395</strain>
    </source>
</reference>
<keyword id="KW-0238">DNA-binding</keyword>
<keyword id="KW-0804">Transcription</keyword>
<keyword id="KW-0805">Transcription regulation</keyword>
<sequence length="298" mass="33655">MRGLDYRWIEALDSVVSKGSFERAAEQLFISQSAVSQRIKQLEKYLAQPVLIREQPPRPTLVGKKLLGLYRRVCLIEQELVPELTNQEHVRPVSMSIATNADSLATWLLPALDKVMKSRQVELNLVIYGESRTLDKLKNGEVVGAISLEPQPITGCSAEYLGQMEYLCVASPEFYQKYFAKGVTPRSLIKAPAVSYDQYDELHNKFLWDYFAVLRDKVINHTVGSSEAFVRLALSGAAYCLIPRLQIISELESGALINMTPDFMLSYPIFWHHWQLETGVLLEISDAITAYAKSVLPQ</sequence>
<comment type="function">
    <text evidence="1">Controls the transcription of genes involved in arginine and lysine metabolism.</text>
</comment>
<comment type="subunit">
    <text evidence="1">Homodimer.</text>
</comment>
<comment type="similarity">
    <text evidence="2">Belongs to the LysR transcriptional regulatory family.</text>
</comment>
<gene>
    <name evidence="1" type="primary">argP</name>
    <name type="synonym">iciA</name>
    <name type="ordered locus">VC0395_A0034</name>
    <name type="ordered locus">VC395_0526</name>
</gene>
<feature type="chain" id="PRO_1000072473" description="HTH-type transcriptional regulator ArgP">
    <location>
        <begin position="1"/>
        <end position="298"/>
    </location>
</feature>
<feature type="domain" description="HTH lysR-type" evidence="1">
    <location>
        <begin position="4"/>
        <end position="60"/>
    </location>
</feature>
<feature type="DNA-binding region" description="H-T-H motif" evidence="1">
    <location>
        <begin position="21"/>
        <end position="40"/>
    </location>
</feature>
<organism>
    <name type="scientific">Vibrio cholerae serotype O1 (strain ATCC 39541 / Classical Ogawa 395 / O395)</name>
    <dbReference type="NCBI Taxonomy" id="345073"/>
    <lineage>
        <taxon>Bacteria</taxon>
        <taxon>Pseudomonadati</taxon>
        <taxon>Pseudomonadota</taxon>
        <taxon>Gammaproteobacteria</taxon>
        <taxon>Vibrionales</taxon>
        <taxon>Vibrionaceae</taxon>
        <taxon>Vibrio</taxon>
    </lineage>
</organism>
<evidence type="ECO:0000255" key="1">
    <source>
        <dbReference type="HAMAP-Rule" id="MF_00513"/>
    </source>
</evidence>
<evidence type="ECO:0000305" key="2"/>